<sequence>MEIRERILADMQVAETIDAHEEIRKSVEFLKAYLKKNTFLKSFVLGISGGQDSTLTGKLAQMAISELRAETGDDEYQFFAVSLPYGTQLDESDRQDALDFMAPDNRLTVNIKASVDASVAALAEAGVELSDFAKGNEKARERMKVQYAIAAMHKGVVVGTDHSAEAVTGFYTKYGDGGTDINPLFRLNKRQGKALLKELGCPEHLYLKKPTADLEDNKPALPDEVALGVTYDQIDDYLEGKEVPADAAAKIENWFIKTEHKRHMAITIFDDFWK</sequence>
<organism>
    <name type="scientific">Listeria innocua serovar 6a (strain ATCC BAA-680 / CLIP 11262)</name>
    <dbReference type="NCBI Taxonomy" id="272626"/>
    <lineage>
        <taxon>Bacteria</taxon>
        <taxon>Bacillati</taxon>
        <taxon>Bacillota</taxon>
        <taxon>Bacilli</taxon>
        <taxon>Bacillales</taxon>
        <taxon>Listeriaceae</taxon>
        <taxon>Listeria</taxon>
    </lineage>
</organism>
<accession>Q92CU3</accession>
<protein>
    <recommendedName>
        <fullName evidence="1">NH(3)-dependent NAD(+) synthetase</fullName>
        <ecNumber evidence="1">6.3.1.5</ecNumber>
    </recommendedName>
</protein>
<gene>
    <name evidence="1" type="primary">nadE</name>
    <name type="ordered locus">lin1078</name>
</gene>
<comment type="function">
    <text evidence="1">Catalyzes the ATP-dependent amidation of deamido-NAD to form NAD. Uses ammonia as a nitrogen source.</text>
</comment>
<comment type="catalytic activity">
    <reaction evidence="1">
        <text>deamido-NAD(+) + NH4(+) + ATP = AMP + diphosphate + NAD(+) + H(+)</text>
        <dbReference type="Rhea" id="RHEA:21188"/>
        <dbReference type="ChEBI" id="CHEBI:15378"/>
        <dbReference type="ChEBI" id="CHEBI:28938"/>
        <dbReference type="ChEBI" id="CHEBI:30616"/>
        <dbReference type="ChEBI" id="CHEBI:33019"/>
        <dbReference type="ChEBI" id="CHEBI:57540"/>
        <dbReference type="ChEBI" id="CHEBI:58437"/>
        <dbReference type="ChEBI" id="CHEBI:456215"/>
        <dbReference type="EC" id="6.3.1.5"/>
    </reaction>
</comment>
<comment type="pathway">
    <text evidence="1">Cofactor biosynthesis; NAD(+) biosynthesis; NAD(+) from deamido-NAD(+) (ammonia route): step 1/1.</text>
</comment>
<comment type="subunit">
    <text evidence="1">Homodimer.</text>
</comment>
<comment type="similarity">
    <text evidence="1">Belongs to the NAD synthetase family.</text>
</comment>
<feature type="chain" id="PRO_0000152177" description="NH(3)-dependent NAD(+) synthetase">
    <location>
        <begin position="1"/>
        <end position="274"/>
    </location>
</feature>
<feature type="binding site" evidence="1">
    <location>
        <begin position="46"/>
        <end position="53"/>
    </location>
    <ligand>
        <name>ATP</name>
        <dbReference type="ChEBI" id="CHEBI:30616"/>
    </ligand>
</feature>
<feature type="binding site" evidence="1">
    <location>
        <position position="52"/>
    </location>
    <ligand>
        <name>Mg(2+)</name>
        <dbReference type="ChEBI" id="CHEBI:18420"/>
    </ligand>
</feature>
<feature type="binding site" evidence="1">
    <location>
        <position position="140"/>
    </location>
    <ligand>
        <name>deamido-NAD(+)</name>
        <dbReference type="ChEBI" id="CHEBI:58437"/>
    </ligand>
</feature>
<feature type="binding site" evidence="1">
    <location>
        <position position="160"/>
    </location>
    <ligand>
        <name>ATP</name>
        <dbReference type="ChEBI" id="CHEBI:30616"/>
    </ligand>
</feature>
<feature type="binding site" evidence="1">
    <location>
        <position position="165"/>
    </location>
    <ligand>
        <name>Mg(2+)</name>
        <dbReference type="ChEBI" id="CHEBI:18420"/>
    </ligand>
</feature>
<feature type="binding site" evidence="1">
    <location>
        <position position="173"/>
    </location>
    <ligand>
        <name>deamido-NAD(+)</name>
        <dbReference type="ChEBI" id="CHEBI:58437"/>
    </ligand>
</feature>
<feature type="binding site" evidence="1">
    <location>
        <position position="180"/>
    </location>
    <ligand>
        <name>deamido-NAD(+)</name>
        <dbReference type="ChEBI" id="CHEBI:58437"/>
    </ligand>
</feature>
<feature type="binding site" evidence="1">
    <location>
        <position position="189"/>
    </location>
    <ligand>
        <name>ATP</name>
        <dbReference type="ChEBI" id="CHEBI:30616"/>
    </ligand>
</feature>
<feature type="binding site" evidence="1">
    <location>
        <position position="211"/>
    </location>
    <ligand>
        <name>ATP</name>
        <dbReference type="ChEBI" id="CHEBI:30616"/>
    </ligand>
</feature>
<feature type="binding site" evidence="1">
    <location>
        <begin position="260"/>
        <end position="261"/>
    </location>
    <ligand>
        <name>deamido-NAD(+)</name>
        <dbReference type="ChEBI" id="CHEBI:58437"/>
    </ligand>
</feature>
<evidence type="ECO:0000255" key="1">
    <source>
        <dbReference type="HAMAP-Rule" id="MF_00193"/>
    </source>
</evidence>
<reference key="1">
    <citation type="journal article" date="2001" name="Science">
        <title>Comparative genomics of Listeria species.</title>
        <authorList>
            <person name="Glaser P."/>
            <person name="Frangeul L."/>
            <person name="Buchrieser C."/>
            <person name="Rusniok C."/>
            <person name="Amend A."/>
            <person name="Baquero F."/>
            <person name="Berche P."/>
            <person name="Bloecker H."/>
            <person name="Brandt P."/>
            <person name="Chakraborty T."/>
            <person name="Charbit A."/>
            <person name="Chetouani F."/>
            <person name="Couve E."/>
            <person name="de Daruvar A."/>
            <person name="Dehoux P."/>
            <person name="Domann E."/>
            <person name="Dominguez-Bernal G."/>
            <person name="Duchaud E."/>
            <person name="Durant L."/>
            <person name="Dussurget O."/>
            <person name="Entian K.-D."/>
            <person name="Fsihi H."/>
            <person name="Garcia-del Portillo F."/>
            <person name="Garrido P."/>
            <person name="Gautier L."/>
            <person name="Goebel W."/>
            <person name="Gomez-Lopez N."/>
            <person name="Hain T."/>
            <person name="Hauf J."/>
            <person name="Jackson D."/>
            <person name="Jones L.-M."/>
            <person name="Kaerst U."/>
            <person name="Kreft J."/>
            <person name="Kuhn M."/>
            <person name="Kunst F."/>
            <person name="Kurapkat G."/>
            <person name="Madueno E."/>
            <person name="Maitournam A."/>
            <person name="Mata Vicente J."/>
            <person name="Ng E."/>
            <person name="Nedjari H."/>
            <person name="Nordsiek G."/>
            <person name="Novella S."/>
            <person name="de Pablos B."/>
            <person name="Perez-Diaz J.-C."/>
            <person name="Purcell R."/>
            <person name="Remmel B."/>
            <person name="Rose M."/>
            <person name="Schlueter T."/>
            <person name="Simoes N."/>
            <person name="Tierrez A."/>
            <person name="Vazquez-Boland J.-A."/>
            <person name="Voss H."/>
            <person name="Wehland J."/>
            <person name="Cossart P."/>
        </authorList>
    </citation>
    <scope>NUCLEOTIDE SEQUENCE [LARGE SCALE GENOMIC DNA]</scope>
    <source>
        <strain>ATCC BAA-680 / CLIP 11262</strain>
    </source>
</reference>
<name>NADE_LISIN</name>
<keyword id="KW-0067">ATP-binding</keyword>
<keyword id="KW-0436">Ligase</keyword>
<keyword id="KW-0460">Magnesium</keyword>
<keyword id="KW-0479">Metal-binding</keyword>
<keyword id="KW-0520">NAD</keyword>
<keyword id="KW-0547">Nucleotide-binding</keyword>
<dbReference type="EC" id="6.3.1.5" evidence="1"/>
<dbReference type="EMBL" id="AL596167">
    <property type="protein sequence ID" value="CAC96309.1"/>
    <property type="molecule type" value="Genomic_DNA"/>
</dbReference>
<dbReference type="PIR" id="AE1567">
    <property type="entry name" value="AE1567"/>
</dbReference>
<dbReference type="RefSeq" id="WP_003761669.1">
    <property type="nucleotide sequence ID" value="NC_003212.1"/>
</dbReference>
<dbReference type="SMR" id="Q92CU3"/>
<dbReference type="STRING" id="272626.gene:17565408"/>
<dbReference type="GeneID" id="93234526"/>
<dbReference type="KEGG" id="lin:lin1078"/>
<dbReference type="eggNOG" id="COG0171">
    <property type="taxonomic scope" value="Bacteria"/>
</dbReference>
<dbReference type="HOGENOM" id="CLU_059327_3_0_9"/>
<dbReference type="OrthoDB" id="9803818at2"/>
<dbReference type="UniPathway" id="UPA00253">
    <property type="reaction ID" value="UER00333"/>
</dbReference>
<dbReference type="Proteomes" id="UP000002513">
    <property type="component" value="Chromosome"/>
</dbReference>
<dbReference type="GO" id="GO:0005737">
    <property type="term" value="C:cytoplasm"/>
    <property type="evidence" value="ECO:0007669"/>
    <property type="project" value="InterPro"/>
</dbReference>
<dbReference type="GO" id="GO:0005524">
    <property type="term" value="F:ATP binding"/>
    <property type="evidence" value="ECO:0007669"/>
    <property type="project" value="UniProtKB-UniRule"/>
</dbReference>
<dbReference type="GO" id="GO:0004359">
    <property type="term" value="F:glutaminase activity"/>
    <property type="evidence" value="ECO:0007669"/>
    <property type="project" value="InterPro"/>
</dbReference>
<dbReference type="GO" id="GO:0046872">
    <property type="term" value="F:metal ion binding"/>
    <property type="evidence" value="ECO:0007669"/>
    <property type="project" value="UniProtKB-KW"/>
</dbReference>
<dbReference type="GO" id="GO:0003952">
    <property type="term" value="F:NAD+ synthase (glutamine-hydrolyzing) activity"/>
    <property type="evidence" value="ECO:0007669"/>
    <property type="project" value="InterPro"/>
</dbReference>
<dbReference type="GO" id="GO:0008795">
    <property type="term" value="F:NAD+ synthase activity"/>
    <property type="evidence" value="ECO:0007669"/>
    <property type="project" value="UniProtKB-UniRule"/>
</dbReference>
<dbReference type="GO" id="GO:0009435">
    <property type="term" value="P:NAD biosynthetic process"/>
    <property type="evidence" value="ECO:0007669"/>
    <property type="project" value="UniProtKB-UniRule"/>
</dbReference>
<dbReference type="CDD" id="cd00553">
    <property type="entry name" value="NAD_synthase"/>
    <property type="match status" value="1"/>
</dbReference>
<dbReference type="FunFam" id="3.40.50.620:FF:000015">
    <property type="entry name" value="NH(3)-dependent NAD(+) synthetase"/>
    <property type="match status" value="1"/>
</dbReference>
<dbReference type="Gene3D" id="3.40.50.620">
    <property type="entry name" value="HUPs"/>
    <property type="match status" value="1"/>
</dbReference>
<dbReference type="HAMAP" id="MF_00193">
    <property type="entry name" value="NadE_ammonia_dep"/>
    <property type="match status" value="1"/>
</dbReference>
<dbReference type="InterPro" id="IPR022310">
    <property type="entry name" value="NAD/GMP_synthase"/>
</dbReference>
<dbReference type="InterPro" id="IPR003694">
    <property type="entry name" value="NAD_synthase"/>
</dbReference>
<dbReference type="InterPro" id="IPR022926">
    <property type="entry name" value="NH(3)-dep_NAD(+)_synth"/>
</dbReference>
<dbReference type="InterPro" id="IPR014729">
    <property type="entry name" value="Rossmann-like_a/b/a_fold"/>
</dbReference>
<dbReference type="NCBIfam" id="TIGR00552">
    <property type="entry name" value="nadE"/>
    <property type="match status" value="1"/>
</dbReference>
<dbReference type="NCBIfam" id="NF001979">
    <property type="entry name" value="PRK00768.1"/>
    <property type="match status" value="1"/>
</dbReference>
<dbReference type="PANTHER" id="PTHR23090">
    <property type="entry name" value="NH 3 /GLUTAMINE-DEPENDENT NAD + SYNTHETASE"/>
    <property type="match status" value="1"/>
</dbReference>
<dbReference type="PANTHER" id="PTHR23090:SF7">
    <property type="entry name" value="NH(3)-DEPENDENT NAD(+) SYNTHETASE"/>
    <property type="match status" value="1"/>
</dbReference>
<dbReference type="Pfam" id="PF02540">
    <property type="entry name" value="NAD_synthase"/>
    <property type="match status" value="1"/>
</dbReference>
<dbReference type="SUPFAM" id="SSF52402">
    <property type="entry name" value="Adenine nucleotide alpha hydrolases-like"/>
    <property type="match status" value="1"/>
</dbReference>
<proteinExistence type="inferred from homology"/>